<comment type="function">
    <text>Auxin response factors (ARFs) are transcriptional factors that bind specifically to the DNA sequence 5'-TGTCTC-3' found in the auxin-responsive promoter elements (AuxREs).</text>
</comment>
<comment type="subunit">
    <text evidence="1">Homodimers and heterodimers.</text>
</comment>
<comment type="subcellular location">
    <subcellularLocation>
        <location evidence="2">Nucleus</location>
    </subcellularLocation>
</comment>
<comment type="tissue specificity">
    <text evidence="5">Expressed in roots, culms, leaves and young panicles.</text>
</comment>
<comment type="domain">
    <text>Interactions between auxin response factors (ARFs) and Aux/IAA proteins occur through their C-terminal dimerization domains III and IV.</text>
</comment>
<comment type="similarity">
    <text evidence="6">Belongs to the ARF family.</text>
</comment>
<name>ARFY_ORYSJ</name>
<accession>Q2QM84</accession>
<accession>A0A0P0YD34</accession>
<accession>Q8S980</accession>
<gene>
    <name type="primary">ARF25</name>
    <name type="synonym">ARF6B</name>
    <name type="ordered locus">Os12g0613700</name>
    <name type="ordered locus">LOC_Os12g41950</name>
    <name type="ORF">OsJ_035418</name>
</gene>
<feature type="chain" id="PRO_0000299285" description="Auxin response factor 25">
    <location>
        <begin position="1"/>
        <end position="899"/>
    </location>
</feature>
<feature type="domain" description="PB1" evidence="3">
    <location>
        <begin position="766"/>
        <end position="850"/>
    </location>
</feature>
<feature type="DNA-binding region" description="TF-B3" evidence="2">
    <location>
        <begin position="132"/>
        <end position="234"/>
    </location>
</feature>
<feature type="region of interest" description="Disordered" evidence="4">
    <location>
        <begin position="1"/>
        <end position="20"/>
    </location>
</feature>
<feature type="region of interest" description="Disordered" evidence="4">
    <location>
        <begin position="546"/>
        <end position="586"/>
    </location>
</feature>
<feature type="compositionally biased region" description="Low complexity" evidence="4">
    <location>
        <begin position="546"/>
        <end position="564"/>
    </location>
</feature>
<feature type="compositionally biased region" description="Polar residues" evidence="4">
    <location>
        <begin position="575"/>
        <end position="586"/>
    </location>
</feature>
<feature type="sequence conflict" description="In Ref. 6; AK121703." evidence="6" ref="6">
    <original>P</original>
    <variation>S</variation>
    <location>
        <position position="168"/>
    </location>
</feature>
<feature type="sequence conflict" description="In Ref. 6; AK121703." evidence="6" ref="6">
    <original>S</original>
    <variation>L</variation>
    <location>
        <position position="774"/>
    </location>
</feature>
<proteinExistence type="evidence at transcript level"/>
<organism>
    <name type="scientific">Oryza sativa subsp. japonica</name>
    <name type="common">Rice</name>
    <dbReference type="NCBI Taxonomy" id="39947"/>
    <lineage>
        <taxon>Eukaryota</taxon>
        <taxon>Viridiplantae</taxon>
        <taxon>Streptophyta</taxon>
        <taxon>Embryophyta</taxon>
        <taxon>Tracheophyta</taxon>
        <taxon>Spermatophyta</taxon>
        <taxon>Magnoliopsida</taxon>
        <taxon>Liliopsida</taxon>
        <taxon>Poales</taxon>
        <taxon>Poaceae</taxon>
        <taxon>BOP clade</taxon>
        <taxon>Oryzoideae</taxon>
        <taxon>Oryzeae</taxon>
        <taxon>Oryzinae</taxon>
        <taxon>Oryza</taxon>
        <taxon>Oryza sativa</taxon>
    </lineage>
</organism>
<evidence type="ECO:0000250" key="1"/>
<evidence type="ECO:0000255" key="2">
    <source>
        <dbReference type="PROSITE-ProRule" id="PRU00326"/>
    </source>
</evidence>
<evidence type="ECO:0000255" key="3">
    <source>
        <dbReference type="PROSITE-ProRule" id="PRU01081"/>
    </source>
</evidence>
<evidence type="ECO:0000256" key="4">
    <source>
        <dbReference type="SAM" id="MobiDB-lite"/>
    </source>
</evidence>
<evidence type="ECO:0000269" key="5">
    <source>
    </source>
</evidence>
<evidence type="ECO:0000305" key="6"/>
<sequence length="899" mass="99862">MKLSPPASADMPQALPENDGEQRCLNSELWHACAGPLVSLPVVRSRVVYFPQGHSEQVAASTNKEVDAQIPNYPNLPPQLICQLHNVTMHADAETDEVYAQMTLQPLSPEEQKEPFLPMELGAASKQPTNYFCKTLTASDTSTHGGFSVPRRAAEKVFPPLDFSQQPPAQELIARDLHDNEWKFRHIFRGQPKRHLLTTGWSVFVSAKRLVAGDSVIFIWNDNNQLLLGIRRANRQQTVMPSSVLSSDSMHIGLLAAAAHAAATNSRFTIFYNPRASPSEFVIPLAKYVKAVYHTRVSVGMRFRMLFETEESSVRRYMGTITSISDLDSVRWPNSHWRSVKVGWDESTTGDKQPRVSLWEIEPLTTFPMYPSAFPLRLKRPWASGLPMHGMFNGGGNDDFARYSSLMWLRDGNRGTQSLNFQGHGVSPWLQPRIDSPLLGLKPDTYQQMAAAALEEIRYGDPSKQHPATLQYQQTHNLNSGLNSLFASHVLGQVQFQPQQSPLQVVQQGHCQNTGDSGFLQGQLPRLQLHNTQQLLKEQELQQQQRQHVLQEQSSQEMQQQLPSSDHHVADVASESGSAPQAQSSLLSGSSFYNQNLLEGNSDPPLHLHNNFHNFSNQEASNLLILPRSSQLMASDGWPSKRLTLESAVHPEAPSMHPKIEKVNHQGISHFPGAFPPQSARGCSIVQDCRADAENRLLSSSFELQDGMTSIITDANRETDTMAIPLLRYSGADLTTENTLATSNCLGESGTFNPLNNISVNPSQGATFVKVYKSGSLGRSLDISRFSSYCELRSELERLFGLEGQLEDPVRSGWQLVFVDRENDILLVGDDPWQEFANSVWCIKILSPQEVQQLVRGGDGLLSSPGARMQQSNACDDYSASHNMQNIAGNIASVAPLDY</sequence>
<dbReference type="EMBL" id="DP000011">
    <property type="protein sequence ID" value="ABA99400.1"/>
    <property type="molecule type" value="Genomic_DNA"/>
</dbReference>
<dbReference type="EMBL" id="AP008218">
    <property type="protein sequence ID" value="BAF30285.1"/>
    <property type="molecule type" value="Genomic_DNA"/>
</dbReference>
<dbReference type="EMBL" id="AP014968">
    <property type="protein sequence ID" value="BAT18068.1"/>
    <property type="molecule type" value="Genomic_DNA"/>
</dbReference>
<dbReference type="EMBL" id="CM000149">
    <property type="protein sequence ID" value="EAZ21209.1"/>
    <property type="molecule type" value="Genomic_DNA"/>
</dbReference>
<dbReference type="EMBL" id="AK121703">
    <property type="status" value="NOT_ANNOTATED_CDS"/>
    <property type="molecule type" value="mRNA"/>
</dbReference>
<dbReference type="EMBL" id="AB071295">
    <property type="protein sequence ID" value="BAB85915.1"/>
    <property type="molecule type" value="mRNA"/>
</dbReference>
<dbReference type="RefSeq" id="XP_015619766.1">
    <property type="nucleotide sequence ID" value="XM_015764280.1"/>
</dbReference>
<dbReference type="SMR" id="Q2QM84"/>
<dbReference type="FunCoup" id="Q2QM84">
    <property type="interactions" value="21"/>
</dbReference>
<dbReference type="STRING" id="39947.Q2QM84"/>
<dbReference type="PaxDb" id="39947-Q2QM84"/>
<dbReference type="EnsemblPlants" id="Os12t0613700-01">
    <property type="protein sequence ID" value="Os12t0613700-01"/>
    <property type="gene ID" value="Os12g0613700"/>
</dbReference>
<dbReference type="Gramene" id="Os12t0613700-01">
    <property type="protein sequence ID" value="Os12t0613700-01"/>
    <property type="gene ID" value="Os12g0613700"/>
</dbReference>
<dbReference type="KEGG" id="dosa:Os12g0613700"/>
<dbReference type="eggNOG" id="ENOG502QSCZ">
    <property type="taxonomic scope" value="Eukaryota"/>
</dbReference>
<dbReference type="HOGENOM" id="CLU_002626_1_1_1"/>
<dbReference type="InParanoid" id="Q2QM84"/>
<dbReference type="OMA" id="CCWERGA"/>
<dbReference type="OrthoDB" id="2016915at2759"/>
<dbReference type="Proteomes" id="UP000000763">
    <property type="component" value="Chromosome 12"/>
</dbReference>
<dbReference type="Proteomes" id="UP000007752">
    <property type="component" value="Chromosome 12"/>
</dbReference>
<dbReference type="Proteomes" id="UP000059680">
    <property type="component" value="Chromosome 12"/>
</dbReference>
<dbReference type="ExpressionAtlas" id="Q2QM84">
    <property type="expression patterns" value="baseline and differential"/>
</dbReference>
<dbReference type="GO" id="GO:0005634">
    <property type="term" value="C:nucleus"/>
    <property type="evidence" value="ECO:0007669"/>
    <property type="project" value="UniProtKB-SubCell"/>
</dbReference>
<dbReference type="GO" id="GO:0003677">
    <property type="term" value="F:DNA binding"/>
    <property type="evidence" value="ECO:0007669"/>
    <property type="project" value="UniProtKB-KW"/>
</dbReference>
<dbReference type="GO" id="GO:0009734">
    <property type="term" value="P:auxin-activated signaling pathway"/>
    <property type="evidence" value="ECO:0007669"/>
    <property type="project" value="UniProtKB-KW"/>
</dbReference>
<dbReference type="GO" id="GO:0006355">
    <property type="term" value="P:regulation of DNA-templated transcription"/>
    <property type="evidence" value="ECO:0007669"/>
    <property type="project" value="InterPro"/>
</dbReference>
<dbReference type="CDD" id="cd10017">
    <property type="entry name" value="B3_DNA"/>
    <property type="match status" value="1"/>
</dbReference>
<dbReference type="FunFam" id="2.30.30.1040:FF:000001">
    <property type="entry name" value="Auxin response factor"/>
    <property type="match status" value="1"/>
</dbReference>
<dbReference type="FunFam" id="2.40.330.10:FF:000001">
    <property type="entry name" value="Auxin response factor"/>
    <property type="match status" value="1"/>
</dbReference>
<dbReference type="FunFam" id="3.10.20.90:FF:000047">
    <property type="entry name" value="Auxin response factor"/>
    <property type="match status" value="1"/>
</dbReference>
<dbReference type="Gene3D" id="2.30.30.1040">
    <property type="match status" value="1"/>
</dbReference>
<dbReference type="Gene3D" id="2.40.330.10">
    <property type="entry name" value="DNA-binding pseudobarrel domain"/>
    <property type="match status" value="1"/>
</dbReference>
<dbReference type="Gene3D" id="3.10.20.90">
    <property type="entry name" value="Phosphatidylinositol 3-kinase Catalytic Subunit, Chain A, domain 1"/>
    <property type="match status" value="1"/>
</dbReference>
<dbReference type="InterPro" id="IPR010525">
    <property type="entry name" value="ARF_dom"/>
</dbReference>
<dbReference type="InterPro" id="IPR044835">
    <property type="entry name" value="ARF_plant"/>
</dbReference>
<dbReference type="InterPro" id="IPR003340">
    <property type="entry name" value="B3_DNA-bd"/>
</dbReference>
<dbReference type="InterPro" id="IPR015300">
    <property type="entry name" value="DNA-bd_pseudobarrel_sf"/>
</dbReference>
<dbReference type="InterPro" id="IPR053793">
    <property type="entry name" value="PB1-like"/>
</dbReference>
<dbReference type="PANTHER" id="PTHR31384">
    <property type="entry name" value="AUXIN RESPONSE FACTOR 4-RELATED"/>
    <property type="match status" value="1"/>
</dbReference>
<dbReference type="PANTHER" id="PTHR31384:SF150">
    <property type="entry name" value="AUXIN RESPONSE FACTOR 6"/>
    <property type="match status" value="1"/>
</dbReference>
<dbReference type="Pfam" id="PF06507">
    <property type="entry name" value="ARF_AD"/>
    <property type="match status" value="1"/>
</dbReference>
<dbReference type="Pfam" id="PF02362">
    <property type="entry name" value="B3"/>
    <property type="match status" value="1"/>
</dbReference>
<dbReference type="SMART" id="SM01019">
    <property type="entry name" value="B3"/>
    <property type="match status" value="1"/>
</dbReference>
<dbReference type="SUPFAM" id="SSF54277">
    <property type="entry name" value="CAD &amp; PB1 domains"/>
    <property type="match status" value="1"/>
</dbReference>
<dbReference type="SUPFAM" id="SSF101936">
    <property type="entry name" value="DNA-binding pseudobarrel domain"/>
    <property type="match status" value="1"/>
</dbReference>
<dbReference type="PROSITE" id="PS50863">
    <property type="entry name" value="B3"/>
    <property type="match status" value="1"/>
</dbReference>
<dbReference type="PROSITE" id="PS51745">
    <property type="entry name" value="PB1"/>
    <property type="match status" value="1"/>
</dbReference>
<keyword id="KW-0927">Auxin signaling pathway</keyword>
<keyword id="KW-0238">DNA-binding</keyword>
<keyword id="KW-0539">Nucleus</keyword>
<keyword id="KW-1185">Reference proteome</keyword>
<keyword id="KW-0804">Transcription</keyword>
<keyword id="KW-0805">Transcription regulation</keyword>
<reference key="1">
    <citation type="journal article" date="2005" name="BMC Biol.">
        <title>The sequence of rice chromosomes 11 and 12, rich in disease resistance genes and recent gene duplications.</title>
        <authorList>
            <consortium name="The rice chromosomes 11 and 12 sequencing consortia"/>
        </authorList>
    </citation>
    <scope>NUCLEOTIDE SEQUENCE [LARGE SCALE GENOMIC DNA]</scope>
    <source>
        <strain>cv. Nipponbare</strain>
    </source>
</reference>
<reference key="2">
    <citation type="journal article" date="2005" name="Nature">
        <title>The map-based sequence of the rice genome.</title>
        <authorList>
            <consortium name="International rice genome sequencing project (IRGSP)"/>
        </authorList>
    </citation>
    <scope>NUCLEOTIDE SEQUENCE [LARGE SCALE GENOMIC DNA]</scope>
    <source>
        <strain>cv. Nipponbare</strain>
    </source>
</reference>
<reference key="3">
    <citation type="journal article" date="2008" name="Nucleic Acids Res.">
        <title>The rice annotation project database (RAP-DB): 2008 update.</title>
        <authorList>
            <consortium name="The rice annotation project (RAP)"/>
        </authorList>
    </citation>
    <scope>GENOME REANNOTATION</scope>
    <source>
        <strain>cv. Nipponbare</strain>
    </source>
</reference>
<reference key="4">
    <citation type="journal article" date="2013" name="Rice">
        <title>Improvement of the Oryza sativa Nipponbare reference genome using next generation sequence and optical map data.</title>
        <authorList>
            <person name="Kawahara Y."/>
            <person name="de la Bastide M."/>
            <person name="Hamilton J.P."/>
            <person name="Kanamori H."/>
            <person name="McCombie W.R."/>
            <person name="Ouyang S."/>
            <person name="Schwartz D.C."/>
            <person name="Tanaka T."/>
            <person name="Wu J."/>
            <person name="Zhou S."/>
            <person name="Childs K.L."/>
            <person name="Davidson R.M."/>
            <person name="Lin H."/>
            <person name="Quesada-Ocampo L."/>
            <person name="Vaillancourt B."/>
            <person name="Sakai H."/>
            <person name="Lee S.S."/>
            <person name="Kim J."/>
            <person name="Numa H."/>
            <person name="Itoh T."/>
            <person name="Buell C.R."/>
            <person name="Matsumoto T."/>
        </authorList>
    </citation>
    <scope>GENOME REANNOTATION</scope>
    <source>
        <strain>cv. Nipponbare</strain>
    </source>
</reference>
<reference key="5">
    <citation type="journal article" date="2005" name="PLoS Biol.">
        <title>The genomes of Oryza sativa: a history of duplications.</title>
        <authorList>
            <person name="Yu J."/>
            <person name="Wang J."/>
            <person name="Lin W."/>
            <person name="Li S."/>
            <person name="Li H."/>
            <person name="Zhou J."/>
            <person name="Ni P."/>
            <person name="Dong W."/>
            <person name="Hu S."/>
            <person name="Zeng C."/>
            <person name="Zhang J."/>
            <person name="Zhang Y."/>
            <person name="Li R."/>
            <person name="Xu Z."/>
            <person name="Li S."/>
            <person name="Li X."/>
            <person name="Zheng H."/>
            <person name="Cong L."/>
            <person name="Lin L."/>
            <person name="Yin J."/>
            <person name="Geng J."/>
            <person name="Li G."/>
            <person name="Shi J."/>
            <person name="Liu J."/>
            <person name="Lv H."/>
            <person name="Li J."/>
            <person name="Wang J."/>
            <person name="Deng Y."/>
            <person name="Ran L."/>
            <person name="Shi X."/>
            <person name="Wang X."/>
            <person name="Wu Q."/>
            <person name="Li C."/>
            <person name="Ren X."/>
            <person name="Wang J."/>
            <person name="Wang X."/>
            <person name="Li D."/>
            <person name="Liu D."/>
            <person name="Zhang X."/>
            <person name="Ji Z."/>
            <person name="Zhao W."/>
            <person name="Sun Y."/>
            <person name="Zhang Z."/>
            <person name="Bao J."/>
            <person name="Han Y."/>
            <person name="Dong L."/>
            <person name="Ji J."/>
            <person name="Chen P."/>
            <person name="Wu S."/>
            <person name="Liu J."/>
            <person name="Xiao Y."/>
            <person name="Bu D."/>
            <person name="Tan J."/>
            <person name="Yang L."/>
            <person name="Ye C."/>
            <person name="Zhang J."/>
            <person name="Xu J."/>
            <person name="Zhou Y."/>
            <person name="Yu Y."/>
            <person name="Zhang B."/>
            <person name="Zhuang S."/>
            <person name="Wei H."/>
            <person name="Liu B."/>
            <person name="Lei M."/>
            <person name="Yu H."/>
            <person name="Li Y."/>
            <person name="Xu H."/>
            <person name="Wei S."/>
            <person name="He X."/>
            <person name="Fang L."/>
            <person name="Zhang Z."/>
            <person name="Zhang Y."/>
            <person name="Huang X."/>
            <person name="Su Z."/>
            <person name="Tong W."/>
            <person name="Li J."/>
            <person name="Tong Z."/>
            <person name="Li S."/>
            <person name="Ye J."/>
            <person name="Wang L."/>
            <person name="Fang L."/>
            <person name="Lei T."/>
            <person name="Chen C.-S."/>
            <person name="Chen H.-C."/>
            <person name="Xu Z."/>
            <person name="Li H."/>
            <person name="Huang H."/>
            <person name="Zhang F."/>
            <person name="Xu H."/>
            <person name="Li N."/>
            <person name="Zhao C."/>
            <person name="Li S."/>
            <person name="Dong L."/>
            <person name="Huang Y."/>
            <person name="Li L."/>
            <person name="Xi Y."/>
            <person name="Qi Q."/>
            <person name="Li W."/>
            <person name="Zhang B."/>
            <person name="Hu W."/>
            <person name="Zhang Y."/>
            <person name="Tian X."/>
            <person name="Jiao Y."/>
            <person name="Liang X."/>
            <person name="Jin J."/>
            <person name="Gao L."/>
            <person name="Zheng W."/>
            <person name="Hao B."/>
            <person name="Liu S.-M."/>
            <person name="Wang W."/>
            <person name="Yuan L."/>
            <person name="Cao M."/>
            <person name="McDermott J."/>
            <person name="Samudrala R."/>
            <person name="Wang J."/>
            <person name="Wong G.K.-S."/>
            <person name="Yang H."/>
        </authorList>
    </citation>
    <scope>NUCLEOTIDE SEQUENCE [LARGE SCALE GENOMIC DNA]</scope>
    <source>
        <strain>cv. Nipponbare</strain>
    </source>
</reference>
<reference key="6">
    <citation type="journal article" date="2003" name="Science">
        <title>Collection, mapping, and annotation of over 28,000 cDNA clones from japonica rice.</title>
        <authorList>
            <consortium name="The rice full-length cDNA consortium"/>
        </authorList>
    </citation>
    <scope>NUCLEOTIDE SEQUENCE [LARGE SCALE MRNA]</scope>
    <source>
        <strain>cv. Nipponbare</strain>
    </source>
</reference>
<reference key="7">
    <citation type="journal article" date="2001" name="Genes Genet. Syst.">
        <title>Auxin response factor family in rice.</title>
        <authorList>
            <person name="Sato Y."/>
            <person name="Nishimura A."/>
            <person name="Ito M."/>
            <person name="Ashikari M."/>
            <person name="Hirano H.-Y."/>
            <person name="Matsuoka M."/>
        </authorList>
    </citation>
    <scope>NUCLEOTIDE SEQUENCE [MRNA] OF 20-899</scope>
    <source>
        <strain>cv. Nipponbare</strain>
    </source>
</reference>
<reference key="8">
    <citation type="journal article" date="2007" name="Gene">
        <title>Genome-wide analysis of the auxin response factors (ARF) gene family in rice (Oryza sativa).</title>
        <authorList>
            <person name="Wang D."/>
            <person name="Pei K."/>
            <person name="Fu Y."/>
            <person name="Sun Z."/>
            <person name="Li S."/>
            <person name="Liu H."/>
            <person name="Tang K."/>
            <person name="Han B."/>
            <person name="Tao Y."/>
        </authorList>
    </citation>
    <scope>GENE FAMILY</scope>
    <scope>TISSUE SPECIFICITY</scope>
    <scope>NOMENCLATURE</scope>
</reference>
<protein>
    <recommendedName>
        <fullName>Auxin response factor 25</fullName>
    </recommendedName>
    <alternativeName>
        <fullName>OsARF6b</fullName>
    </alternativeName>
</protein>